<feature type="chain" id="PRO_0000357335" description="Methylthioribose kinase">
    <location>
        <begin position="1"/>
        <end position="393"/>
    </location>
</feature>
<feature type="binding site" evidence="1">
    <location>
        <position position="38"/>
    </location>
    <ligand>
        <name>ATP</name>
        <dbReference type="ChEBI" id="CHEBI:30616"/>
    </ligand>
</feature>
<feature type="binding site" evidence="1">
    <location>
        <position position="53"/>
    </location>
    <ligand>
        <name>ATP</name>
        <dbReference type="ChEBI" id="CHEBI:30616"/>
    </ligand>
</feature>
<feature type="binding site" evidence="1">
    <location>
        <begin position="107"/>
        <end position="109"/>
    </location>
    <ligand>
        <name>ATP</name>
        <dbReference type="ChEBI" id="CHEBI:30616"/>
    </ligand>
</feature>
<feature type="binding site" evidence="1">
    <location>
        <position position="225"/>
    </location>
    <ligand>
        <name>substrate</name>
    </ligand>
</feature>
<feature type="binding site" evidence="1">
    <location>
        <begin position="242"/>
        <end position="244"/>
    </location>
    <ligand>
        <name>ATP</name>
        <dbReference type="ChEBI" id="CHEBI:30616"/>
    </ligand>
</feature>
<feature type="binding site" evidence="1">
    <location>
        <position position="332"/>
    </location>
    <ligand>
        <name>substrate</name>
    </ligand>
</feature>
<gene>
    <name evidence="1" type="primary">mtnK</name>
    <name type="ordered locus">BALH_3650</name>
</gene>
<dbReference type="EC" id="2.7.1.100" evidence="1"/>
<dbReference type="EMBL" id="CP000485">
    <property type="protein sequence ID" value="ABK86882.1"/>
    <property type="molecule type" value="Genomic_DNA"/>
</dbReference>
<dbReference type="RefSeq" id="WP_000542711.1">
    <property type="nucleotide sequence ID" value="NC_008600.1"/>
</dbReference>
<dbReference type="SMR" id="A0RI39"/>
<dbReference type="GeneID" id="45023923"/>
<dbReference type="KEGG" id="btl:BALH_3650"/>
<dbReference type="HOGENOM" id="CLU_033681_0_0_9"/>
<dbReference type="UniPathway" id="UPA00904">
    <property type="reaction ID" value="UER00872"/>
</dbReference>
<dbReference type="GO" id="GO:0005524">
    <property type="term" value="F:ATP binding"/>
    <property type="evidence" value="ECO:0007669"/>
    <property type="project" value="UniProtKB-UniRule"/>
</dbReference>
<dbReference type="GO" id="GO:0046522">
    <property type="term" value="F:S-methyl-5-thioribose kinase activity"/>
    <property type="evidence" value="ECO:0007669"/>
    <property type="project" value="UniProtKB-UniRule"/>
</dbReference>
<dbReference type="GO" id="GO:0019509">
    <property type="term" value="P:L-methionine salvage from methylthioadenosine"/>
    <property type="evidence" value="ECO:0007669"/>
    <property type="project" value="UniProtKB-UniRule"/>
</dbReference>
<dbReference type="FunFam" id="3.30.200.20:FF:000436">
    <property type="entry name" value="Methylthioribose kinase"/>
    <property type="match status" value="1"/>
</dbReference>
<dbReference type="FunFam" id="3.90.1200.10:FF:000008">
    <property type="entry name" value="Methylthioribose kinase"/>
    <property type="match status" value="1"/>
</dbReference>
<dbReference type="Gene3D" id="3.90.1200.10">
    <property type="match status" value="1"/>
</dbReference>
<dbReference type="Gene3D" id="3.30.200.20">
    <property type="entry name" value="Phosphorylase Kinase, domain 1"/>
    <property type="match status" value="1"/>
</dbReference>
<dbReference type="HAMAP" id="MF_01683">
    <property type="entry name" value="Salvage_MtnK"/>
    <property type="match status" value="1"/>
</dbReference>
<dbReference type="InterPro" id="IPR002575">
    <property type="entry name" value="Aminoglycoside_PTrfase"/>
</dbReference>
<dbReference type="InterPro" id="IPR011009">
    <property type="entry name" value="Kinase-like_dom_sf"/>
</dbReference>
<dbReference type="InterPro" id="IPR009212">
    <property type="entry name" value="Methylthioribose_kinase"/>
</dbReference>
<dbReference type="NCBIfam" id="TIGR01767">
    <property type="entry name" value="MTRK"/>
    <property type="match status" value="1"/>
</dbReference>
<dbReference type="PANTHER" id="PTHR34273">
    <property type="entry name" value="METHYLTHIORIBOSE KINASE"/>
    <property type="match status" value="1"/>
</dbReference>
<dbReference type="PANTHER" id="PTHR34273:SF2">
    <property type="entry name" value="METHYLTHIORIBOSE KINASE"/>
    <property type="match status" value="1"/>
</dbReference>
<dbReference type="Pfam" id="PF01636">
    <property type="entry name" value="APH"/>
    <property type="match status" value="1"/>
</dbReference>
<dbReference type="PIRSF" id="PIRSF031134">
    <property type="entry name" value="MTRK"/>
    <property type="match status" value="1"/>
</dbReference>
<dbReference type="SUPFAM" id="SSF56112">
    <property type="entry name" value="Protein kinase-like (PK-like)"/>
    <property type="match status" value="1"/>
</dbReference>
<keyword id="KW-0028">Amino-acid biosynthesis</keyword>
<keyword id="KW-0067">ATP-binding</keyword>
<keyword id="KW-0418">Kinase</keyword>
<keyword id="KW-0486">Methionine biosynthesis</keyword>
<keyword id="KW-0547">Nucleotide-binding</keyword>
<keyword id="KW-0808">Transferase</keyword>
<proteinExistence type="inferred from homology"/>
<organism>
    <name type="scientific">Bacillus thuringiensis (strain Al Hakam)</name>
    <dbReference type="NCBI Taxonomy" id="412694"/>
    <lineage>
        <taxon>Bacteria</taxon>
        <taxon>Bacillati</taxon>
        <taxon>Bacillota</taxon>
        <taxon>Bacilli</taxon>
        <taxon>Bacillales</taxon>
        <taxon>Bacillaceae</taxon>
        <taxon>Bacillus</taxon>
        <taxon>Bacillus cereus group</taxon>
    </lineage>
</organism>
<reference key="1">
    <citation type="journal article" date="2007" name="J. Bacteriol.">
        <title>The complete genome sequence of Bacillus thuringiensis Al Hakam.</title>
        <authorList>
            <person name="Challacombe J.F."/>
            <person name="Altherr M.R."/>
            <person name="Xie G."/>
            <person name="Bhotika S.S."/>
            <person name="Brown N."/>
            <person name="Bruce D."/>
            <person name="Campbell C.S."/>
            <person name="Campbell M.L."/>
            <person name="Chen J."/>
            <person name="Chertkov O."/>
            <person name="Cleland C."/>
            <person name="Dimitrijevic M."/>
            <person name="Doggett N.A."/>
            <person name="Fawcett J.J."/>
            <person name="Glavina T."/>
            <person name="Goodwin L.A."/>
            <person name="Green L.D."/>
            <person name="Han C.S."/>
            <person name="Hill K.K."/>
            <person name="Hitchcock P."/>
            <person name="Jackson P.J."/>
            <person name="Keim P."/>
            <person name="Kewalramani A.R."/>
            <person name="Longmire J."/>
            <person name="Lucas S."/>
            <person name="Malfatti S."/>
            <person name="Martinez D."/>
            <person name="McMurry K."/>
            <person name="Meincke L.J."/>
            <person name="Misra M."/>
            <person name="Moseman B.L."/>
            <person name="Mundt M."/>
            <person name="Munk A.C."/>
            <person name="Okinaka R.T."/>
            <person name="Parson-Quintana B."/>
            <person name="Reilly L.P."/>
            <person name="Richardson P."/>
            <person name="Robinson D.L."/>
            <person name="Saunders E."/>
            <person name="Tapia R."/>
            <person name="Tesmer J.G."/>
            <person name="Thayer N."/>
            <person name="Thompson L.S."/>
            <person name="Tice H."/>
            <person name="Ticknor L.O."/>
            <person name="Wills P.L."/>
            <person name="Gilna P."/>
            <person name="Brettin T.S."/>
        </authorList>
    </citation>
    <scope>NUCLEOTIDE SEQUENCE [LARGE SCALE GENOMIC DNA]</scope>
    <source>
        <strain>Al Hakam</strain>
    </source>
</reference>
<sequence>MGYYSLTEVTAVQYAKEHGYFEKKANVVCHEIGDGNLNYVFKLDDGEKSIIIKQALPYAKVVGESWPLSIKRATIESKALQIFAKYVPEYVPVVYSHDEELAVTVIEDLSRLTITRKGLIDGEEYPLLSQHIGRFLANVLFYTSDFGLQSEEKRVLEGTFVNPDLCKITEDLVFTDPFGHYDTNDYEPELQLTIDELWSDKTLKLKVAQYKYKFLTRKEALIHGDLHTGSIFSSPSETKVIDPEFATYGPFGFDIGQFIANLLLNALSREEEQRGVLFFHIEKTWSYFVETFTKLWIGEGVEAYTKEKQWLPIILQNIFTDAVGFAGCELIRRTIGLAHVADLDEITNKETRIQAKKQALSLGKELIKYESKNADIQLFRTLFQQTVSGGIKA</sequence>
<evidence type="ECO:0000255" key="1">
    <source>
        <dbReference type="HAMAP-Rule" id="MF_01683"/>
    </source>
</evidence>
<comment type="function">
    <text evidence="1">Catalyzes the phosphorylation of methylthioribose into methylthioribose-1-phosphate.</text>
</comment>
<comment type="catalytic activity">
    <reaction evidence="1">
        <text>5-(methylsulfanyl)-D-ribose + ATP = 5-(methylsulfanyl)-alpha-D-ribose 1-phosphate + ADP + H(+)</text>
        <dbReference type="Rhea" id="RHEA:22312"/>
        <dbReference type="ChEBI" id="CHEBI:15378"/>
        <dbReference type="ChEBI" id="CHEBI:30616"/>
        <dbReference type="ChEBI" id="CHEBI:58533"/>
        <dbReference type="ChEBI" id="CHEBI:78440"/>
        <dbReference type="ChEBI" id="CHEBI:456216"/>
        <dbReference type="EC" id="2.7.1.100"/>
    </reaction>
</comment>
<comment type="pathway">
    <text evidence="1">Amino-acid biosynthesis; L-methionine biosynthesis via salvage pathway; S-methyl-5-thio-alpha-D-ribose 1-phosphate from S-methyl-5'-thioadenosine (hydrolase route): step 2/2.</text>
</comment>
<comment type="subunit">
    <text evidence="1">Homodimer.</text>
</comment>
<comment type="similarity">
    <text evidence="1">Belongs to the methylthioribose kinase family.</text>
</comment>
<protein>
    <recommendedName>
        <fullName evidence="1">Methylthioribose kinase</fullName>
        <shortName evidence="1">MTR kinase</shortName>
        <ecNumber evidence="1">2.7.1.100</ecNumber>
    </recommendedName>
</protein>
<accession>A0RI39</accession>
<name>MTNK_BACAH</name>